<evidence type="ECO:0000255" key="1">
    <source>
        <dbReference type="HAMAP-Rule" id="MF_00163"/>
    </source>
</evidence>
<dbReference type="EC" id="3.5.1.88" evidence="1"/>
<dbReference type="EMBL" id="CP000478">
    <property type="protein sequence ID" value="ABK15849.1"/>
    <property type="molecule type" value="Genomic_DNA"/>
</dbReference>
<dbReference type="RefSeq" id="WP_011697022.1">
    <property type="nucleotide sequence ID" value="NC_008554.1"/>
</dbReference>
<dbReference type="SMR" id="A0LEJ7"/>
<dbReference type="FunCoup" id="A0LEJ7">
    <property type="interactions" value="492"/>
</dbReference>
<dbReference type="STRING" id="335543.Sfum_0147"/>
<dbReference type="KEGG" id="sfu:Sfum_0147"/>
<dbReference type="eggNOG" id="COG0242">
    <property type="taxonomic scope" value="Bacteria"/>
</dbReference>
<dbReference type="HOGENOM" id="CLU_061901_2_1_7"/>
<dbReference type="InParanoid" id="A0LEJ7"/>
<dbReference type="OrthoDB" id="9804313at2"/>
<dbReference type="Proteomes" id="UP000001784">
    <property type="component" value="Chromosome"/>
</dbReference>
<dbReference type="GO" id="GO:0046872">
    <property type="term" value="F:metal ion binding"/>
    <property type="evidence" value="ECO:0007669"/>
    <property type="project" value="UniProtKB-KW"/>
</dbReference>
<dbReference type="GO" id="GO:0042586">
    <property type="term" value="F:peptide deformylase activity"/>
    <property type="evidence" value="ECO:0007669"/>
    <property type="project" value="UniProtKB-UniRule"/>
</dbReference>
<dbReference type="GO" id="GO:0043686">
    <property type="term" value="P:co-translational protein modification"/>
    <property type="evidence" value="ECO:0007669"/>
    <property type="project" value="TreeGrafter"/>
</dbReference>
<dbReference type="GO" id="GO:0006412">
    <property type="term" value="P:translation"/>
    <property type="evidence" value="ECO:0007669"/>
    <property type="project" value="UniProtKB-UniRule"/>
</dbReference>
<dbReference type="CDD" id="cd00487">
    <property type="entry name" value="Pep_deformylase"/>
    <property type="match status" value="1"/>
</dbReference>
<dbReference type="Gene3D" id="3.90.45.10">
    <property type="entry name" value="Peptide deformylase"/>
    <property type="match status" value="1"/>
</dbReference>
<dbReference type="HAMAP" id="MF_00163">
    <property type="entry name" value="Pep_deformylase"/>
    <property type="match status" value="1"/>
</dbReference>
<dbReference type="InterPro" id="IPR023635">
    <property type="entry name" value="Peptide_deformylase"/>
</dbReference>
<dbReference type="InterPro" id="IPR036821">
    <property type="entry name" value="Peptide_deformylase_sf"/>
</dbReference>
<dbReference type="NCBIfam" id="TIGR00079">
    <property type="entry name" value="pept_deformyl"/>
    <property type="match status" value="1"/>
</dbReference>
<dbReference type="NCBIfam" id="NF001159">
    <property type="entry name" value="PRK00150.1-3"/>
    <property type="match status" value="1"/>
</dbReference>
<dbReference type="PANTHER" id="PTHR10458">
    <property type="entry name" value="PEPTIDE DEFORMYLASE"/>
    <property type="match status" value="1"/>
</dbReference>
<dbReference type="PANTHER" id="PTHR10458:SF22">
    <property type="entry name" value="PEPTIDE DEFORMYLASE"/>
    <property type="match status" value="1"/>
</dbReference>
<dbReference type="Pfam" id="PF01327">
    <property type="entry name" value="Pep_deformylase"/>
    <property type="match status" value="1"/>
</dbReference>
<dbReference type="PIRSF" id="PIRSF004749">
    <property type="entry name" value="Pep_def"/>
    <property type="match status" value="1"/>
</dbReference>
<dbReference type="PRINTS" id="PR01576">
    <property type="entry name" value="PDEFORMYLASE"/>
</dbReference>
<dbReference type="SUPFAM" id="SSF56420">
    <property type="entry name" value="Peptide deformylase"/>
    <property type="match status" value="1"/>
</dbReference>
<organism>
    <name type="scientific">Syntrophobacter fumaroxidans (strain DSM 10017 / MPOB)</name>
    <dbReference type="NCBI Taxonomy" id="335543"/>
    <lineage>
        <taxon>Bacteria</taxon>
        <taxon>Pseudomonadati</taxon>
        <taxon>Thermodesulfobacteriota</taxon>
        <taxon>Syntrophobacteria</taxon>
        <taxon>Syntrophobacterales</taxon>
        <taxon>Syntrophobacteraceae</taxon>
        <taxon>Syntrophobacter</taxon>
    </lineage>
</organism>
<accession>A0LEJ7</accession>
<protein>
    <recommendedName>
        <fullName evidence="1">Peptide deformylase</fullName>
        <shortName evidence="1">PDF</shortName>
        <ecNumber evidence="1">3.5.1.88</ecNumber>
    </recommendedName>
    <alternativeName>
        <fullName evidence="1">Polypeptide deformylase</fullName>
    </alternativeName>
</protein>
<name>DEF_SYNFM</name>
<comment type="function">
    <text evidence="1">Removes the formyl group from the N-terminal Met of newly synthesized proteins. Requires at least a dipeptide for an efficient rate of reaction. N-terminal L-methionine is a prerequisite for activity but the enzyme has broad specificity at other positions.</text>
</comment>
<comment type="catalytic activity">
    <reaction evidence="1">
        <text>N-terminal N-formyl-L-methionyl-[peptide] + H2O = N-terminal L-methionyl-[peptide] + formate</text>
        <dbReference type="Rhea" id="RHEA:24420"/>
        <dbReference type="Rhea" id="RHEA-COMP:10639"/>
        <dbReference type="Rhea" id="RHEA-COMP:10640"/>
        <dbReference type="ChEBI" id="CHEBI:15377"/>
        <dbReference type="ChEBI" id="CHEBI:15740"/>
        <dbReference type="ChEBI" id="CHEBI:49298"/>
        <dbReference type="ChEBI" id="CHEBI:64731"/>
        <dbReference type="EC" id="3.5.1.88"/>
    </reaction>
</comment>
<comment type="cofactor">
    <cofactor evidence="1">
        <name>Fe(2+)</name>
        <dbReference type="ChEBI" id="CHEBI:29033"/>
    </cofactor>
    <text evidence="1">Binds 1 Fe(2+) ion.</text>
</comment>
<comment type="similarity">
    <text evidence="1">Belongs to the polypeptide deformylase family.</text>
</comment>
<gene>
    <name evidence="1" type="primary">def</name>
    <name type="ordered locus">Sfum_0147</name>
</gene>
<sequence>MAILDICTYPDPILRQKAASVENIDEALIKLIDDMTETMYEAPGIGLAANQVGRSLSLIVVDLQRQDEEHGLIVLINPQIVATQGEITWEEGCLSVPEYFSAVKRHAEVVVRGYGRDGKEMEIQAGGLLAVALQHEIDHLEGRLFIDRLNPITRDIFKRKWKKKLKEATA</sequence>
<feature type="chain" id="PRO_0000301118" description="Peptide deformylase">
    <location>
        <begin position="1"/>
        <end position="170"/>
    </location>
</feature>
<feature type="active site" evidence="1">
    <location>
        <position position="136"/>
    </location>
</feature>
<feature type="binding site" evidence="1">
    <location>
        <position position="93"/>
    </location>
    <ligand>
        <name>Fe cation</name>
        <dbReference type="ChEBI" id="CHEBI:24875"/>
    </ligand>
</feature>
<feature type="binding site" evidence="1">
    <location>
        <position position="135"/>
    </location>
    <ligand>
        <name>Fe cation</name>
        <dbReference type="ChEBI" id="CHEBI:24875"/>
    </ligand>
</feature>
<feature type="binding site" evidence="1">
    <location>
        <position position="139"/>
    </location>
    <ligand>
        <name>Fe cation</name>
        <dbReference type="ChEBI" id="CHEBI:24875"/>
    </ligand>
</feature>
<proteinExistence type="inferred from homology"/>
<reference key="1">
    <citation type="submission" date="2006-10" db="EMBL/GenBank/DDBJ databases">
        <title>Complete sequence of Syntrophobacter fumaroxidans MPOB.</title>
        <authorList>
            <consortium name="US DOE Joint Genome Institute"/>
            <person name="Copeland A."/>
            <person name="Lucas S."/>
            <person name="Lapidus A."/>
            <person name="Barry K."/>
            <person name="Detter J.C."/>
            <person name="Glavina del Rio T."/>
            <person name="Hammon N."/>
            <person name="Israni S."/>
            <person name="Pitluck S."/>
            <person name="Goltsman E.G."/>
            <person name="Martinez M."/>
            <person name="Schmutz J."/>
            <person name="Larimer F."/>
            <person name="Land M."/>
            <person name="Hauser L."/>
            <person name="Kyrpides N."/>
            <person name="Kim E."/>
            <person name="Boone D.R."/>
            <person name="Brockman F."/>
            <person name="Culley D."/>
            <person name="Ferry J."/>
            <person name="Gunsalus R."/>
            <person name="McInerney M.J."/>
            <person name="Morrison M."/>
            <person name="Plugge C."/>
            <person name="Rohlin L."/>
            <person name="Scholten J."/>
            <person name="Sieber J."/>
            <person name="Stams A.J.M."/>
            <person name="Worm P."/>
            <person name="Henstra A.M."/>
            <person name="Richardson P."/>
        </authorList>
    </citation>
    <scope>NUCLEOTIDE SEQUENCE [LARGE SCALE GENOMIC DNA]</scope>
    <source>
        <strain>DSM 10017 / MPOB</strain>
    </source>
</reference>
<keyword id="KW-0378">Hydrolase</keyword>
<keyword id="KW-0408">Iron</keyword>
<keyword id="KW-0479">Metal-binding</keyword>
<keyword id="KW-0648">Protein biosynthesis</keyword>
<keyword id="KW-1185">Reference proteome</keyword>